<comment type="catalytic activity">
    <reaction evidence="1">
        <text>CMP + ATP = CDP + ADP</text>
        <dbReference type="Rhea" id="RHEA:11600"/>
        <dbReference type="ChEBI" id="CHEBI:30616"/>
        <dbReference type="ChEBI" id="CHEBI:58069"/>
        <dbReference type="ChEBI" id="CHEBI:60377"/>
        <dbReference type="ChEBI" id="CHEBI:456216"/>
        <dbReference type="EC" id="2.7.4.25"/>
    </reaction>
</comment>
<comment type="catalytic activity">
    <reaction evidence="1">
        <text>dCMP + ATP = dCDP + ADP</text>
        <dbReference type="Rhea" id="RHEA:25094"/>
        <dbReference type="ChEBI" id="CHEBI:30616"/>
        <dbReference type="ChEBI" id="CHEBI:57566"/>
        <dbReference type="ChEBI" id="CHEBI:58593"/>
        <dbReference type="ChEBI" id="CHEBI:456216"/>
        <dbReference type="EC" id="2.7.4.25"/>
    </reaction>
</comment>
<comment type="subcellular location">
    <subcellularLocation>
        <location evidence="1">Cytoplasm</location>
    </subcellularLocation>
</comment>
<comment type="similarity">
    <text evidence="1">Belongs to the cytidylate kinase family. Type 1 subfamily.</text>
</comment>
<gene>
    <name evidence="1" type="primary">cmk</name>
    <name type="ordered locus">EF_1547</name>
</gene>
<organism>
    <name type="scientific">Enterococcus faecalis (strain ATCC 700802 / V583)</name>
    <dbReference type="NCBI Taxonomy" id="226185"/>
    <lineage>
        <taxon>Bacteria</taxon>
        <taxon>Bacillati</taxon>
        <taxon>Bacillota</taxon>
        <taxon>Bacilli</taxon>
        <taxon>Lactobacillales</taxon>
        <taxon>Enterococcaceae</taxon>
        <taxon>Enterococcus</taxon>
    </lineage>
</organism>
<sequence length="226" mass="24808">MGKISIAIDGPASSGKSTVAKILAKQLNYVYCDTGAMYRAITYLALQNQIDIQAEEPLVALCVNHTISFQQAENGQRVFIDGHEVTEAIRQPDVTNAVSAVSKHAKVREEMVALQQKIGQAGGVVMDGRDIGTAVLPKAEVKIFLVASVEERAERRFKENQEKGIETDFETLKAEIERRDYLDSTREVSPLVQASDAVKIDTTGLTIEEVVAAIQNVIKQKGFELF</sequence>
<protein>
    <recommendedName>
        <fullName evidence="1">Cytidylate kinase</fullName>
        <shortName evidence="1">CK</shortName>
        <ecNumber evidence="1">2.7.4.25</ecNumber>
    </recommendedName>
    <alternativeName>
        <fullName evidence="1">Cytidine monophosphate kinase</fullName>
        <shortName evidence="1">CMP kinase</shortName>
    </alternativeName>
</protein>
<accession>Q834T6</accession>
<reference key="1">
    <citation type="journal article" date="2003" name="Science">
        <title>Role of mobile DNA in the evolution of vancomycin-resistant Enterococcus faecalis.</title>
        <authorList>
            <person name="Paulsen I.T."/>
            <person name="Banerjei L."/>
            <person name="Myers G.S.A."/>
            <person name="Nelson K.E."/>
            <person name="Seshadri R."/>
            <person name="Read T.D."/>
            <person name="Fouts D.E."/>
            <person name="Eisen J.A."/>
            <person name="Gill S.R."/>
            <person name="Heidelberg J.F."/>
            <person name="Tettelin H."/>
            <person name="Dodson R.J."/>
            <person name="Umayam L.A."/>
            <person name="Brinkac L.M."/>
            <person name="Beanan M.J."/>
            <person name="Daugherty S.C."/>
            <person name="DeBoy R.T."/>
            <person name="Durkin S.A."/>
            <person name="Kolonay J.F."/>
            <person name="Madupu R."/>
            <person name="Nelson W.C."/>
            <person name="Vamathevan J.J."/>
            <person name="Tran B."/>
            <person name="Upton J."/>
            <person name="Hansen T."/>
            <person name="Shetty J."/>
            <person name="Khouri H.M."/>
            <person name="Utterback T.R."/>
            <person name="Radune D."/>
            <person name="Ketchum K.A."/>
            <person name="Dougherty B.A."/>
            <person name="Fraser C.M."/>
        </authorList>
    </citation>
    <scope>NUCLEOTIDE SEQUENCE [LARGE SCALE GENOMIC DNA]</scope>
    <source>
        <strain>ATCC 700802 / V583</strain>
    </source>
</reference>
<dbReference type="EC" id="2.7.4.25" evidence="1"/>
<dbReference type="EMBL" id="AE016830">
    <property type="protein sequence ID" value="AAO81334.1"/>
    <property type="molecule type" value="Genomic_DNA"/>
</dbReference>
<dbReference type="RefSeq" id="NP_815264.1">
    <property type="nucleotide sequence ID" value="NC_004668.1"/>
</dbReference>
<dbReference type="RefSeq" id="WP_002357612.1">
    <property type="nucleotide sequence ID" value="NZ_KE136528.1"/>
</dbReference>
<dbReference type="SMR" id="Q834T6"/>
<dbReference type="STRING" id="226185.EF_1547"/>
<dbReference type="EnsemblBacteria" id="AAO81334">
    <property type="protein sequence ID" value="AAO81334"/>
    <property type="gene ID" value="EF_1547"/>
</dbReference>
<dbReference type="GeneID" id="60893853"/>
<dbReference type="KEGG" id="efa:EF1547"/>
<dbReference type="PATRIC" id="fig|226185.45.peg.1957"/>
<dbReference type="eggNOG" id="COG0283">
    <property type="taxonomic scope" value="Bacteria"/>
</dbReference>
<dbReference type="HOGENOM" id="CLU_079959_0_2_9"/>
<dbReference type="Proteomes" id="UP000001415">
    <property type="component" value="Chromosome"/>
</dbReference>
<dbReference type="GO" id="GO:0005829">
    <property type="term" value="C:cytosol"/>
    <property type="evidence" value="ECO:0007669"/>
    <property type="project" value="TreeGrafter"/>
</dbReference>
<dbReference type="GO" id="GO:0005524">
    <property type="term" value="F:ATP binding"/>
    <property type="evidence" value="ECO:0007669"/>
    <property type="project" value="UniProtKB-UniRule"/>
</dbReference>
<dbReference type="GO" id="GO:0036430">
    <property type="term" value="F:CMP kinase activity"/>
    <property type="evidence" value="ECO:0007669"/>
    <property type="project" value="RHEA"/>
</dbReference>
<dbReference type="GO" id="GO:0036431">
    <property type="term" value="F:dCMP kinase activity"/>
    <property type="evidence" value="ECO:0007669"/>
    <property type="project" value="RHEA"/>
</dbReference>
<dbReference type="GO" id="GO:0015949">
    <property type="term" value="P:nucleobase-containing small molecule interconversion"/>
    <property type="evidence" value="ECO:0007669"/>
    <property type="project" value="TreeGrafter"/>
</dbReference>
<dbReference type="GO" id="GO:0006220">
    <property type="term" value="P:pyrimidine nucleotide metabolic process"/>
    <property type="evidence" value="ECO:0007669"/>
    <property type="project" value="UniProtKB-UniRule"/>
</dbReference>
<dbReference type="CDD" id="cd02020">
    <property type="entry name" value="CMPK"/>
    <property type="match status" value="1"/>
</dbReference>
<dbReference type="FunFam" id="3.40.50.300:FF:000484">
    <property type="entry name" value="Cytidylate kinase"/>
    <property type="match status" value="1"/>
</dbReference>
<dbReference type="Gene3D" id="3.40.50.300">
    <property type="entry name" value="P-loop containing nucleotide triphosphate hydrolases"/>
    <property type="match status" value="1"/>
</dbReference>
<dbReference type="HAMAP" id="MF_00238">
    <property type="entry name" value="Cytidyl_kinase_type1"/>
    <property type="match status" value="1"/>
</dbReference>
<dbReference type="InterPro" id="IPR003136">
    <property type="entry name" value="Cytidylate_kin"/>
</dbReference>
<dbReference type="InterPro" id="IPR011994">
    <property type="entry name" value="Cytidylate_kinase_dom"/>
</dbReference>
<dbReference type="InterPro" id="IPR027417">
    <property type="entry name" value="P-loop_NTPase"/>
</dbReference>
<dbReference type="NCBIfam" id="TIGR00017">
    <property type="entry name" value="cmk"/>
    <property type="match status" value="1"/>
</dbReference>
<dbReference type="PANTHER" id="PTHR21299:SF2">
    <property type="entry name" value="CYTIDYLATE KINASE"/>
    <property type="match status" value="1"/>
</dbReference>
<dbReference type="PANTHER" id="PTHR21299">
    <property type="entry name" value="CYTIDYLATE KINASE/PANTOATE-BETA-ALANINE LIGASE"/>
    <property type="match status" value="1"/>
</dbReference>
<dbReference type="Pfam" id="PF02224">
    <property type="entry name" value="Cytidylate_kin"/>
    <property type="match status" value="1"/>
</dbReference>
<dbReference type="SUPFAM" id="SSF52540">
    <property type="entry name" value="P-loop containing nucleoside triphosphate hydrolases"/>
    <property type="match status" value="1"/>
</dbReference>
<proteinExistence type="inferred from homology"/>
<keyword id="KW-0067">ATP-binding</keyword>
<keyword id="KW-0963">Cytoplasm</keyword>
<keyword id="KW-0418">Kinase</keyword>
<keyword id="KW-0547">Nucleotide-binding</keyword>
<keyword id="KW-1185">Reference proteome</keyword>
<keyword id="KW-0808">Transferase</keyword>
<evidence type="ECO:0000255" key="1">
    <source>
        <dbReference type="HAMAP-Rule" id="MF_00238"/>
    </source>
</evidence>
<name>KCY_ENTFA</name>
<feature type="chain" id="PRO_0000131916" description="Cytidylate kinase">
    <location>
        <begin position="1"/>
        <end position="226"/>
    </location>
</feature>
<feature type="binding site" evidence="1">
    <location>
        <begin position="10"/>
        <end position="18"/>
    </location>
    <ligand>
        <name>ATP</name>
        <dbReference type="ChEBI" id="CHEBI:30616"/>
    </ligand>
</feature>